<sequence>MADNKANKEQVHRVFQNISKKYDRLNNIISFEQHKVWRKRVMKDMGVRKGTKALDVCCGTGDWTIALSKAVGPTGEVTGIDFSENMLEVGKEKTASMENVKLVHGDAMELPFEDNSFDYVTIGFGLRNVPDYLVALKEMNRVLKPGGMVVCLETSQPTLPVFKQMYALYFKFVMPIFGKLFAKSKEEYEWLQQSTFNFPGKEELKRMFEEAGFINVRVRSFTGGVAAMHLGYKEKDNTKGD</sequence>
<keyword id="KW-0474">Menaquinone biosynthesis</keyword>
<keyword id="KW-0489">Methyltransferase</keyword>
<keyword id="KW-0949">S-adenosyl-L-methionine</keyword>
<keyword id="KW-0808">Transferase</keyword>
<accession>A5ISZ9</accession>
<gene>
    <name evidence="1" type="primary">menG</name>
    <name type="ordered locus">SaurJH9_1528</name>
</gene>
<name>MENG_STAA9</name>
<proteinExistence type="inferred from homology"/>
<evidence type="ECO:0000255" key="1">
    <source>
        <dbReference type="HAMAP-Rule" id="MF_01813"/>
    </source>
</evidence>
<dbReference type="EC" id="2.1.1.163" evidence="1"/>
<dbReference type="EMBL" id="CP000703">
    <property type="protein sequence ID" value="ABQ49322.1"/>
    <property type="molecule type" value="Genomic_DNA"/>
</dbReference>
<dbReference type="RefSeq" id="WP_000774684.1">
    <property type="nucleotide sequence ID" value="NC_009487.1"/>
</dbReference>
<dbReference type="SMR" id="A5ISZ9"/>
<dbReference type="KEGG" id="saj:SaurJH9_1528"/>
<dbReference type="HOGENOM" id="CLU_037990_0_0_9"/>
<dbReference type="UniPathway" id="UPA00079">
    <property type="reaction ID" value="UER00169"/>
</dbReference>
<dbReference type="GO" id="GO:0043770">
    <property type="term" value="F:demethylmenaquinone methyltransferase activity"/>
    <property type="evidence" value="ECO:0007669"/>
    <property type="project" value="UniProtKB-UniRule"/>
</dbReference>
<dbReference type="GO" id="GO:0009234">
    <property type="term" value="P:menaquinone biosynthetic process"/>
    <property type="evidence" value="ECO:0007669"/>
    <property type="project" value="UniProtKB-UniRule"/>
</dbReference>
<dbReference type="GO" id="GO:0032259">
    <property type="term" value="P:methylation"/>
    <property type="evidence" value="ECO:0007669"/>
    <property type="project" value="UniProtKB-KW"/>
</dbReference>
<dbReference type="CDD" id="cd02440">
    <property type="entry name" value="AdoMet_MTases"/>
    <property type="match status" value="1"/>
</dbReference>
<dbReference type="FunFam" id="3.40.50.150:FF:000086">
    <property type="entry name" value="Demethylmenaquinone methyltransferase"/>
    <property type="match status" value="1"/>
</dbReference>
<dbReference type="Gene3D" id="3.40.50.150">
    <property type="entry name" value="Vaccinia Virus protein VP39"/>
    <property type="match status" value="1"/>
</dbReference>
<dbReference type="HAMAP" id="MF_01813">
    <property type="entry name" value="MenG_UbiE_methyltr"/>
    <property type="match status" value="1"/>
</dbReference>
<dbReference type="InterPro" id="IPR029063">
    <property type="entry name" value="SAM-dependent_MTases_sf"/>
</dbReference>
<dbReference type="InterPro" id="IPR004033">
    <property type="entry name" value="UbiE/COQ5_MeTrFase"/>
</dbReference>
<dbReference type="InterPro" id="IPR023576">
    <property type="entry name" value="UbiE/COQ5_MeTrFase_CS"/>
</dbReference>
<dbReference type="NCBIfam" id="TIGR01934">
    <property type="entry name" value="MenG_MenH_UbiE"/>
    <property type="match status" value="1"/>
</dbReference>
<dbReference type="NCBIfam" id="NF001243">
    <property type="entry name" value="PRK00216.1-4"/>
    <property type="match status" value="1"/>
</dbReference>
<dbReference type="NCBIfam" id="NF001244">
    <property type="entry name" value="PRK00216.1-5"/>
    <property type="match status" value="1"/>
</dbReference>
<dbReference type="PANTHER" id="PTHR43591:SF24">
    <property type="entry name" value="2-METHOXY-6-POLYPRENYL-1,4-BENZOQUINOL METHYLASE, MITOCHONDRIAL"/>
    <property type="match status" value="1"/>
</dbReference>
<dbReference type="PANTHER" id="PTHR43591">
    <property type="entry name" value="METHYLTRANSFERASE"/>
    <property type="match status" value="1"/>
</dbReference>
<dbReference type="Pfam" id="PF01209">
    <property type="entry name" value="Ubie_methyltran"/>
    <property type="match status" value="1"/>
</dbReference>
<dbReference type="SUPFAM" id="SSF53335">
    <property type="entry name" value="S-adenosyl-L-methionine-dependent methyltransferases"/>
    <property type="match status" value="1"/>
</dbReference>
<dbReference type="PROSITE" id="PS51608">
    <property type="entry name" value="SAM_MT_UBIE"/>
    <property type="match status" value="1"/>
</dbReference>
<dbReference type="PROSITE" id="PS01183">
    <property type="entry name" value="UBIE_1"/>
    <property type="match status" value="1"/>
</dbReference>
<dbReference type="PROSITE" id="PS01184">
    <property type="entry name" value="UBIE_2"/>
    <property type="match status" value="1"/>
</dbReference>
<feature type="chain" id="PRO_1000088300" description="Demethylmenaquinone methyltransferase">
    <location>
        <begin position="1"/>
        <end position="241"/>
    </location>
</feature>
<feature type="binding site" evidence="1">
    <location>
        <position position="60"/>
    </location>
    <ligand>
        <name>S-adenosyl-L-methionine</name>
        <dbReference type="ChEBI" id="CHEBI:59789"/>
    </ligand>
</feature>
<feature type="binding site" evidence="1">
    <location>
        <position position="81"/>
    </location>
    <ligand>
        <name>S-adenosyl-L-methionine</name>
        <dbReference type="ChEBI" id="CHEBI:59789"/>
    </ligand>
</feature>
<feature type="binding site" evidence="1">
    <location>
        <begin position="106"/>
        <end position="107"/>
    </location>
    <ligand>
        <name>S-adenosyl-L-methionine</name>
        <dbReference type="ChEBI" id="CHEBI:59789"/>
    </ligand>
</feature>
<protein>
    <recommendedName>
        <fullName evidence="1">Demethylmenaquinone methyltransferase</fullName>
        <ecNumber evidence="1">2.1.1.163</ecNumber>
    </recommendedName>
</protein>
<organism>
    <name type="scientific">Staphylococcus aureus (strain JH9)</name>
    <dbReference type="NCBI Taxonomy" id="359786"/>
    <lineage>
        <taxon>Bacteria</taxon>
        <taxon>Bacillati</taxon>
        <taxon>Bacillota</taxon>
        <taxon>Bacilli</taxon>
        <taxon>Bacillales</taxon>
        <taxon>Staphylococcaceae</taxon>
        <taxon>Staphylococcus</taxon>
    </lineage>
</organism>
<reference key="1">
    <citation type="submission" date="2007-05" db="EMBL/GenBank/DDBJ databases">
        <title>Complete sequence of chromosome of Staphylococcus aureus subsp. aureus JH9.</title>
        <authorList>
            <consortium name="US DOE Joint Genome Institute"/>
            <person name="Copeland A."/>
            <person name="Lucas S."/>
            <person name="Lapidus A."/>
            <person name="Barry K."/>
            <person name="Detter J.C."/>
            <person name="Glavina del Rio T."/>
            <person name="Hammon N."/>
            <person name="Israni S."/>
            <person name="Pitluck S."/>
            <person name="Chain P."/>
            <person name="Malfatti S."/>
            <person name="Shin M."/>
            <person name="Vergez L."/>
            <person name="Schmutz J."/>
            <person name="Larimer F."/>
            <person name="Land M."/>
            <person name="Hauser L."/>
            <person name="Kyrpides N."/>
            <person name="Kim E."/>
            <person name="Tomasz A."/>
            <person name="Richardson P."/>
        </authorList>
    </citation>
    <scope>NUCLEOTIDE SEQUENCE [LARGE SCALE GENOMIC DNA]</scope>
    <source>
        <strain>JH9</strain>
    </source>
</reference>
<comment type="function">
    <text evidence="1">Methyltransferase required for the conversion of demethylmenaquinol (DMKH2) to menaquinol (MKH2).</text>
</comment>
<comment type="catalytic activity">
    <reaction evidence="1">
        <text>a 2-demethylmenaquinol + S-adenosyl-L-methionine = a menaquinol + S-adenosyl-L-homocysteine + H(+)</text>
        <dbReference type="Rhea" id="RHEA:42640"/>
        <dbReference type="Rhea" id="RHEA-COMP:9539"/>
        <dbReference type="Rhea" id="RHEA-COMP:9563"/>
        <dbReference type="ChEBI" id="CHEBI:15378"/>
        <dbReference type="ChEBI" id="CHEBI:18151"/>
        <dbReference type="ChEBI" id="CHEBI:55437"/>
        <dbReference type="ChEBI" id="CHEBI:57856"/>
        <dbReference type="ChEBI" id="CHEBI:59789"/>
        <dbReference type="EC" id="2.1.1.163"/>
    </reaction>
</comment>
<comment type="pathway">
    <text evidence="1">Quinol/quinone metabolism; menaquinone biosynthesis; menaquinol from 1,4-dihydroxy-2-naphthoate: step 2/2.</text>
</comment>
<comment type="similarity">
    <text evidence="1">Belongs to the class I-like SAM-binding methyltransferase superfamily. MenG/UbiE family.</text>
</comment>